<name>VL1_HPV50</name>
<accession>P50818</accession>
<accession>Q80933</accession>
<dbReference type="EMBL" id="U31790">
    <property type="protein sequence ID" value="AAA79477.1"/>
    <property type="molecule type" value="Genomic_DNA"/>
</dbReference>
<dbReference type="EMBL" id="U21870">
    <property type="protein sequence ID" value="AAA92832.1"/>
    <property type="molecule type" value="Genomic_DNA"/>
</dbReference>
<dbReference type="RefSeq" id="NP_043429.1">
    <property type="nucleotide sequence ID" value="NC_001691.1"/>
</dbReference>
<dbReference type="SMR" id="P50818"/>
<dbReference type="GeneID" id="1403635"/>
<dbReference type="KEGG" id="vg:1403635"/>
<dbReference type="OrthoDB" id="5037at10239"/>
<dbReference type="Proteomes" id="UP000168289">
    <property type="component" value="Genome"/>
</dbReference>
<dbReference type="GO" id="GO:0042025">
    <property type="term" value="C:host cell nucleus"/>
    <property type="evidence" value="ECO:0007669"/>
    <property type="project" value="UniProtKB-SubCell"/>
</dbReference>
<dbReference type="GO" id="GO:0039620">
    <property type="term" value="C:T=7 icosahedral viral capsid"/>
    <property type="evidence" value="ECO:0007669"/>
    <property type="project" value="UniProtKB-UniRule"/>
</dbReference>
<dbReference type="GO" id="GO:0005198">
    <property type="term" value="F:structural molecule activity"/>
    <property type="evidence" value="ECO:0007669"/>
    <property type="project" value="UniProtKB-UniRule"/>
</dbReference>
<dbReference type="GO" id="GO:0075509">
    <property type="term" value="P:endocytosis involved in viral entry into host cell"/>
    <property type="evidence" value="ECO:0007669"/>
    <property type="project" value="UniProtKB-KW"/>
</dbReference>
<dbReference type="GO" id="GO:0019062">
    <property type="term" value="P:virion attachment to host cell"/>
    <property type="evidence" value="ECO:0007669"/>
    <property type="project" value="UniProtKB-UniRule"/>
</dbReference>
<dbReference type="Gene3D" id="2.60.175.20">
    <property type="entry name" value="Major capsid L1 (late) superfamily, Papillomavirus"/>
    <property type="match status" value="2"/>
</dbReference>
<dbReference type="HAMAP" id="MF_04002">
    <property type="entry name" value="PPV_L1"/>
    <property type="match status" value="1"/>
</dbReference>
<dbReference type="InterPro" id="IPR002210">
    <property type="entry name" value="Capsid_L1_Papillomavir"/>
</dbReference>
<dbReference type="InterPro" id="IPR036973">
    <property type="entry name" value="Capsid_L1_sf_Papillomavir"/>
</dbReference>
<dbReference type="InterPro" id="IPR011222">
    <property type="entry name" value="dsDNA_vir_gr_I_capsid"/>
</dbReference>
<dbReference type="Pfam" id="PF00500">
    <property type="entry name" value="Late_protein_L1"/>
    <property type="match status" value="1"/>
</dbReference>
<dbReference type="PRINTS" id="PR00865">
    <property type="entry name" value="HPVCAPSIDL1"/>
</dbReference>
<dbReference type="SUPFAM" id="SSF88648">
    <property type="entry name" value="Group I dsDNA viruses"/>
    <property type="match status" value="1"/>
</dbReference>
<evidence type="ECO:0000255" key="1">
    <source>
        <dbReference type="HAMAP-Rule" id="MF_04002"/>
    </source>
</evidence>
<comment type="function">
    <text evidence="1">Forms an icosahedral capsid with a T=7 symmetry and a 50 nm diameter. The capsid is composed of 72 pentamers linked to each other by disulfide bonds and associated with L2 proteins. Binds to heparan sulfate proteoglycans on cell surface of basal layer keratinocytes to provide initial virion attachment. This binding mediates a conformational change in the virus capsid that facilitates efficient infection. The virion enters the host cell via endocytosis. During virus trafficking, L1 protein dissociates from the viral DNA and the genomic DNA is released to the host nucleus. The virion assembly takes place within the cell nucleus. Encapsulates the genomic DNA together with protein L2.</text>
</comment>
<comment type="subunit">
    <text evidence="1">Self-assembles into homopentamers. The capsid has an icosahedral symmetry and consists of 72 capsomers, with each capsomer being a pentamer of L1. Interacts with the minor capsid protein L2; this interaction is necessary for viral genome encapsidation. Interacts with protein E2; this interaction enhances E2-dependent replication and transcription activation.</text>
</comment>
<comment type="subcellular location">
    <subcellularLocation>
        <location evidence="1">Virion</location>
    </subcellularLocation>
    <subcellularLocation>
        <location evidence="1">Host nucleus</location>
    </subcellularLocation>
</comment>
<comment type="similarity">
    <text evidence="1">Belongs to the papillomaviridae L1 protein family.</text>
</comment>
<proteinExistence type="inferred from homology"/>
<gene>
    <name evidence="1" type="primary">L1</name>
</gene>
<reference key="1">
    <citation type="submission" date="1995-07" db="EMBL/GenBank/DDBJ databases">
        <authorList>
            <person name="Delius H."/>
        </authorList>
    </citation>
    <scope>NUCLEOTIDE SEQUENCE [GENOMIC DNA]</scope>
</reference>
<reference key="2">
    <citation type="journal article" date="1995" name="J. Virol.">
        <title>Analysis of genomic sequences of 95 papillomavirus types: uniting typing, phylogeny, and taxonomy.</title>
        <authorList>
            <person name="Chan S.-Y."/>
            <person name="Delius H."/>
            <person name="Halpern A.L."/>
            <person name="Bernard H.U."/>
        </authorList>
    </citation>
    <scope>NUCLEOTIDE SEQUENCE [GENOMIC DNA] OF 380-475</scope>
</reference>
<organismHost>
    <name type="scientific">Homo sapiens</name>
    <name type="common">Human</name>
    <dbReference type="NCBI Taxonomy" id="9606"/>
</organismHost>
<feature type="chain" id="PRO_0000133533" description="Major capsid protein L1">
    <location>
        <begin position="1"/>
        <end position="515"/>
    </location>
</feature>
<feature type="disulfide bond" description="Interchain (with C-445)" evidence="1">
    <location>
        <position position="174"/>
    </location>
</feature>
<feature type="disulfide bond" description="Interchain (with C-174)" evidence="1">
    <location>
        <position position="445"/>
    </location>
</feature>
<protein>
    <recommendedName>
        <fullName evidence="1">Major capsid protein L1</fullName>
    </recommendedName>
</protein>
<keyword id="KW-0167">Capsid protein</keyword>
<keyword id="KW-1015">Disulfide bond</keyword>
<keyword id="KW-1048">Host nucleus</keyword>
<keyword id="KW-0945">Host-virus interaction</keyword>
<keyword id="KW-0426">Late protein</keyword>
<keyword id="KW-1185">Reference proteome</keyword>
<keyword id="KW-1145">T=7 icosahedral capsid protein</keyword>
<keyword id="KW-1161">Viral attachment to host cell</keyword>
<keyword id="KW-1162">Viral penetration into host cytoplasm</keyword>
<keyword id="KW-0946">Virion</keyword>
<keyword id="KW-1164">Virus endocytosis by host</keyword>
<keyword id="KW-1160">Virus entry into host cell</keyword>
<organism>
    <name type="scientific">Human papillomavirus type 50</name>
    <dbReference type="NCBI Taxonomy" id="40539"/>
    <lineage>
        <taxon>Viruses</taxon>
        <taxon>Monodnaviria</taxon>
        <taxon>Shotokuvirae</taxon>
        <taxon>Cossaviricota</taxon>
        <taxon>Papovaviricetes</taxon>
        <taxon>Zurhausenvirales</taxon>
        <taxon>Papillomaviridae</taxon>
        <taxon>Firstpapillomavirinae</taxon>
        <taxon>Gammapapillomavirus</taxon>
        <taxon>Gammapapillomavirus 3</taxon>
    </lineage>
</organism>
<sequence length="515" mass="58426">MAHWSSTSGKLYLPPSTPVARVLSTDEYVKETDVYFHARSERLLIVGHPYYDIEDGGDIKVPKVSANQYRVFRCELPDPNKFALIDTTLYNSDTERLVWKLVGIEVGRGGPLGVGSTGHPLFNKVGDTENPSFYLGPQEKDERQNLSIDPKQTQLLIVGCKPAVGEYWDLAEPCDKNSLNNGKCPPIQLVNSYIQDGDMGDIGFGNANFPKLQQDRAGVPLDIVDSISLWPDLLKMTKDVYGDHVFFYAKQEQLYARHLFTHAGPIGEPIPNVSGVYNYAVNPNQPEQNRRTNIGSYLYFTTPSGSLNTSSSQLFNRPYWIRRAQGTNNCICWGNEVFVTVFDNTRNINFNISVKKDVNPLDPLNVASSYMYSKDDFNQYSRHTEEYELEFIFQLCKVGLDADILAHLNVMDPRILENWQLAYVPPAPSGIGDTYRYLKSDATKCPAKDSSAEVVDPYKEYTFWNVNLTEKFSSELDQYALGRKFLFQTGLLKRRVRTDYTVATVSKPNKRKRTR</sequence>